<name>CITD_ECOLU</name>
<gene>
    <name evidence="1" type="primary">citD</name>
    <name type="ordered locus">ECUMN_0710</name>
</gene>
<protein>
    <recommendedName>
        <fullName evidence="1">Citrate lyase acyl carrier protein</fullName>
    </recommendedName>
    <alternativeName>
        <fullName evidence="1">Citrate lyase gamma chain</fullName>
    </alternativeName>
</protein>
<accession>B7N9M3</accession>
<reference key="1">
    <citation type="journal article" date="2009" name="PLoS Genet.">
        <title>Organised genome dynamics in the Escherichia coli species results in highly diverse adaptive paths.</title>
        <authorList>
            <person name="Touchon M."/>
            <person name="Hoede C."/>
            <person name="Tenaillon O."/>
            <person name="Barbe V."/>
            <person name="Baeriswyl S."/>
            <person name="Bidet P."/>
            <person name="Bingen E."/>
            <person name="Bonacorsi S."/>
            <person name="Bouchier C."/>
            <person name="Bouvet O."/>
            <person name="Calteau A."/>
            <person name="Chiapello H."/>
            <person name="Clermont O."/>
            <person name="Cruveiller S."/>
            <person name="Danchin A."/>
            <person name="Diard M."/>
            <person name="Dossat C."/>
            <person name="Karoui M.E."/>
            <person name="Frapy E."/>
            <person name="Garry L."/>
            <person name="Ghigo J.M."/>
            <person name="Gilles A.M."/>
            <person name="Johnson J."/>
            <person name="Le Bouguenec C."/>
            <person name="Lescat M."/>
            <person name="Mangenot S."/>
            <person name="Martinez-Jehanne V."/>
            <person name="Matic I."/>
            <person name="Nassif X."/>
            <person name="Oztas S."/>
            <person name="Petit M.A."/>
            <person name="Pichon C."/>
            <person name="Rouy Z."/>
            <person name="Ruf C.S."/>
            <person name="Schneider D."/>
            <person name="Tourret J."/>
            <person name="Vacherie B."/>
            <person name="Vallenet D."/>
            <person name="Medigue C."/>
            <person name="Rocha E.P.C."/>
            <person name="Denamur E."/>
        </authorList>
    </citation>
    <scope>NUCLEOTIDE SEQUENCE [LARGE SCALE GENOMIC DNA]</scope>
    <source>
        <strain>UMN026 / ExPEC</strain>
    </source>
</reference>
<feature type="chain" id="PRO_1000133968" description="Citrate lyase acyl carrier protein">
    <location>
        <begin position="1"/>
        <end position="98"/>
    </location>
</feature>
<feature type="modified residue" description="O-(phosphoribosyl dephospho-coenzyme A)serine" evidence="1">
    <location>
        <position position="14"/>
    </location>
</feature>
<sequence>MKINQPAVAGTLESGDVMIRIAPLDTQDIDLQINSSVEKQFGDAIRTTILDVLARYNVRGVQLNVDDKGALDCILRARLEALLARASGIPALPWEDCQ</sequence>
<comment type="function">
    <text evidence="1">Covalent carrier of the coenzyme of citrate lyase.</text>
</comment>
<comment type="subunit">
    <text evidence="1">Oligomer with a subunit composition of (alpha,beta,gamma)6.</text>
</comment>
<comment type="subcellular location">
    <subcellularLocation>
        <location evidence="1">Cytoplasm</location>
    </subcellularLocation>
</comment>
<comment type="similarity">
    <text evidence="1">Belongs to the CitD family.</text>
</comment>
<keyword id="KW-0963">Cytoplasm</keyword>
<keyword id="KW-0597">Phosphoprotein</keyword>
<dbReference type="EMBL" id="CU928163">
    <property type="protein sequence ID" value="CAR11924.1"/>
    <property type="molecule type" value="Genomic_DNA"/>
</dbReference>
<dbReference type="RefSeq" id="WP_000700703.1">
    <property type="nucleotide sequence ID" value="NC_011751.1"/>
</dbReference>
<dbReference type="RefSeq" id="YP_002411470.1">
    <property type="nucleotide sequence ID" value="NC_011751.1"/>
</dbReference>
<dbReference type="SMR" id="B7N9M3"/>
<dbReference type="STRING" id="585056.ECUMN_0710"/>
<dbReference type="GeneID" id="93776868"/>
<dbReference type="KEGG" id="eum:ECUMN_0710"/>
<dbReference type="PATRIC" id="fig|585056.7.peg.908"/>
<dbReference type="HOGENOM" id="CLU_158489_0_0_6"/>
<dbReference type="Proteomes" id="UP000007097">
    <property type="component" value="Chromosome"/>
</dbReference>
<dbReference type="GO" id="GO:0005737">
    <property type="term" value="C:cytoplasm"/>
    <property type="evidence" value="ECO:0007669"/>
    <property type="project" value="UniProtKB-SubCell"/>
</dbReference>
<dbReference type="HAMAP" id="MF_00805">
    <property type="entry name" value="CitD"/>
    <property type="match status" value="1"/>
</dbReference>
<dbReference type="InterPro" id="IPR006495">
    <property type="entry name" value="CitD"/>
</dbReference>
<dbReference type="InterPro" id="IPR023439">
    <property type="entry name" value="Mal_deCO2ase/Cit_lyase_ACP"/>
</dbReference>
<dbReference type="NCBIfam" id="TIGR01608">
    <property type="entry name" value="citD"/>
    <property type="match status" value="1"/>
</dbReference>
<dbReference type="NCBIfam" id="NF009726">
    <property type="entry name" value="PRK13253.1"/>
    <property type="match status" value="1"/>
</dbReference>
<dbReference type="Pfam" id="PF06857">
    <property type="entry name" value="ACP"/>
    <property type="match status" value="1"/>
</dbReference>
<dbReference type="PIRSF" id="PIRSF002736">
    <property type="entry name" value="Citrt_lyas_gamma"/>
    <property type="match status" value="1"/>
</dbReference>
<organism>
    <name type="scientific">Escherichia coli O17:K52:H18 (strain UMN026 / ExPEC)</name>
    <dbReference type="NCBI Taxonomy" id="585056"/>
    <lineage>
        <taxon>Bacteria</taxon>
        <taxon>Pseudomonadati</taxon>
        <taxon>Pseudomonadota</taxon>
        <taxon>Gammaproteobacteria</taxon>
        <taxon>Enterobacterales</taxon>
        <taxon>Enterobacteriaceae</taxon>
        <taxon>Escherichia</taxon>
    </lineage>
</organism>
<evidence type="ECO:0000255" key="1">
    <source>
        <dbReference type="HAMAP-Rule" id="MF_00805"/>
    </source>
</evidence>
<proteinExistence type="inferred from homology"/>